<sequence>MHYPEPITKLIDSFMKLPGIGPKSAARLAFYVLDMKEDDVLDFAKALVDAKRNLSFCSVCGHITDKDPCYICADTSRDRSVICVVQESKDVIAMEKMRDFHGLYHVLHGTISPMDGIGPEDINIPDLLKRLQDDTIEEVILATNPNVEGEATAMYISRLLKPSGIKVTRIAHGLPVGGDLEYADEVTLSKAMEGRREV</sequence>
<organism>
    <name type="scientific">Listeria monocytogenes serotype 4a (strain HCC23)</name>
    <dbReference type="NCBI Taxonomy" id="552536"/>
    <lineage>
        <taxon>Bacteria</taxon>
        <taxon>Bacillati</taxon>
        <taxon>Bacillota</taxon>
        <taxon>Bacilli</taxon>
        <taxon>Bacillales</taxon>
        <taxon>Listeriaceae</taxon>
        <taxon>Listeria</taxon>
    </lineage>
</organism>
<name>RECR_LISMH</name>
<accession>B8DAT9</accession>
<evidence type="ECO:0000255" key="1">
    <source>
        <dbReference type="HAMAP-Rule" id="MF_00017"/>
    </source>
</evidence>
<proteinExistence type="inferred from homology"/>
<dbReference type="EMBL" id="CP001175">
    <property type="protein sequence ID" value="ACK41164.1"/>
    <property type="molecule type" value="Genomic_DNA"/>
</dbReference>
<dbReference type="RefSeq" id="WP_003722062.1">
    <property type="nucleotide sequence ID" value="NC_011660.1"/>
</dbReference>
<dbReference type="SMR" id="B8DAT9"/>
<dbReference type="GeneID" id="93240591"/>
<dbReference type="KEGG" id="lmh:LMHCC_2832"/>
<dbReference type="HOGENOM" id="CLU_060739_1_0_9"/>
<dbReference type="GO" id="GO:0003677">
    <property type="term" value="F:DNA binding"/>
    <property type="evidence" value="ECO:0007669"/>
    <property type="project" value="UniProtKB-UniRule"/>
</dbReference>
<dbReference type="GO" id="GO:0008270">
    <property type="term" value="F:zinc ion binding"/>
    <property type="evidence" value="ECO:0007669"/>
    <property type="project" value="UniProtKB-KW"/>
</dbReference>
<dbReference type="GO" id="GO:0006310">
    <property type="term" value="P:DNA recombination"/>
    <property type="evidence" value="ECO:0007669"/>
    <property type="project" value="UniProtKB-UniRule"/>
</dbReference>
<dbReference type="GO" id="GO:0006281">
    <property type="term" value="P:DNA repair"/>
    <property type="evidence" value="ECO:0007669"/>
    <property type="project" value="UniProtKB-UniRule"/>
</dbReference>
<dbReference type="CDD" id="cd01025">
    <property type="entry name" value="TOPRIM_recR"/>
    <property type="match status" value="1"/>
</dbReference>
<dbReference type="Gene3D" id="3.30.60.80">
    <property type="match status" value="1"/>
</dbReference>
<dbReference type="Gene3D" id="3.40.1360.10">
    <property type="match status" value="1"/>
</dbReference>
<dbReference type="Gene3D" id="6.10.250.240">
    <property type="match status" value="1"/>
</dbReference>
<dbReference type="Gene3D" id="1.10.8.420">
    <property type="entry name" value="RecR Domain 1"/>
    <property type="match status" value="1"/>
</dbReference>
<dbReference type="HAMAP" id="MF_00017">
    <property type="entry name" value="RecR"/>
    <property type="match status" value="1"/>
</dbReference>
<dbReference type="InterPro" id="IPR000093">
    <property type="entry name" value="DNA_Rcmb_RecR"/>
</dbReference>
<dbReference type="InterPro" id="IPR023627">
    <property type="entry name" value="Rcmb_RecR"/>
</dbReference>
<dbReference type="InterPro" id="IPR015967">
    <property type="entry name" value="Rcmb_RecR_Znf"/>
</dbReference>
<dbReference type="InterPro" id="IPR006171">
    <property type="entry name" value="TOPRIM_dom"/>
</dbReference>
<dbReference type="InterPro" id="IPR034137">
    <property type="entry name" value="TOPRIM_RecR"/>
</dbReference>
<dbReference type="NCBIfam" id="TIGR00615">
    <property type="entry name" value="recR"/>
    <property type="match status" value="1"/>
</dbReference>
<dbReference type="PANTHER" id="PTHR30446">
    <property type="entry name" value="RECOMBINATION PROTEIN RECR"/>
    <property type="match status" value="1"/>
</dbReference>
<dbReference type="PANTHER" id="PTHR30446:SF0">
    <property type="entry name" value="RECOMBINATION PROTEIN RECR"/>
    <property type="match status" value="1"/>
</dbReference>
<dbReference type="Pfam" id="PF21175">
    <property type="entry name" value="RecR_C"/>
    <property type="match status" value="1"/>
</dbReference>
<dbReference type="Pfam" id="PF21176">
    <property type="entry name" value="RecR_HhH"/>
    <property type="match status" value="1"/>
</dbReference>
<dbReference type="Pfam" id="PF02132">
    <property type="entry name" value="RecR_ZnF"/>
    <property type="match status" value="1"/>
</dbReference>
<dbReference type="Pfam" id="PF13662">
    <property type="entry name" value="Toprim_4"/>
    <property type="match status" value="1"/>
</dbReference>
<dbReference type="SMART" id="SM00493">
    <property type="entry name" value="TOPRIM"/>
    <property type="match status" value="1"/>
</dbReference>
<dbReference type="SUPFAM" id="SSF111304">
    <property type="entry name" value="Recombination protein RecR"/>
    <property type="match status" value="1"/>
</dbReference>
<dbReference type="PROSITE" id="PS01300">
    <property type="entry name" value="RECR"/>
    <property type="match status" value="1"/>
</dbReference>
<dbReference type="PROSITE" id="PS50880">
    <property type="entry name" value="TOPRIM"/>
    <property type="match status" value="1"/>
</dbReference>
<comment type="function">
    <text evidence="1">May play a role in DNA repair. It seems to be involved in an RecBC-independent recombinational process of DNA repair. It may act with RecF and RecO.</text>
</comment>
<comment type="similarity">
    <text evidence="1">Belongs to the RecR family.</text>
</comment>
<keyword id="KW-0227">DNA damage</keyword>
<keyword id="KW-0233">DNA recombination</keyword>
<keyword id="KW-0234">DNA repair</keyword>
<keyword id="KW-0479">Metal-binding</keyword>
<keyword id="KW-0862">Zinc</keyword>
<keyword id="KW-0863">Zinc-finger</keyword>
<feature type="chain" id="PRO_1000195396" description="Recombination protein RecR">
    <location>
        <begin position="1"/>
        <end position="198"/>
    </location>
</feature>
<feature type="domain" description="Toprim" evidence="1">
    <location>
        <begin position="80"/>
        <end position="175"/>
    </location>
</feature>
<feature type="zinc finger region" description="C4-type" evidence="1">
    <location>
        <begin position="57"/>
        <end position="72"/>
    </location>
</feature>
<reference key="1">
    <citation type="journal article" date="2011" name="J. Bacteriol.">
        <title>Genome sequence of lineage III Listeria monocytogenes strain HCC23.</title>
        <authorList>
            <person name="Steele C.L."/>
            <person name="Donaldson J.R."/>
            <person name="Paul D."/>
            <person name="Banes M.M."/>
            <person name="Arick T."/>
            <person name="Bridges S.M."/>
            <person name="Lawrence M.L."/>
        </authorList>
    </citation>
    <scope>NUCLEOTIDE SEQUENCE [LARGE SCALE GENOMIC DNA]</scope>
    <source>
        <strain>HCC23</strain>
    </source>
</reference>
<gene>
    <name evidence="1" type="primary">recR</name>
    <name type="ordered locus">LMHCC_2832</name>
</gene>
<protein>
    <recommendedName>
        <fullName evidence="1">Recombination protein RecR</fullName>
    </recommendedName>
</protein>